<proteinExistence type="inferred from homology"/>
<accession>Q8YHP7</accession>
<comment type="function">
    <text evidence="1">DNA-dependent RNA polymerase catalyzes the transcription of DNA into RNA using the four ribonucleoside triphosphates as substrates.</text>
</comment>
<comment type="catalytic activity">
    <reaction evidence="1">
        <text>RNA(n) + a ribonucleoside 5'-triphosphate = RNA(n+1) + diphosphate</text>
        <dbReference type="Rhea" id="RHEA:21248"/>
        <dbReference type="Rhea" id="RHEA-COMP:14527"/>
        <dbReference type="Rhea" id="RHEA-COMP:17342"/>
        <dbReference type="ChEBI" id="CHEBI:33019"/>
        <dbReference type="ChEBI" id="CHEBI:61557"/>
        <dbReference type="ChEBI" id="CHEBI:140395"/>
        <dbReference type="EC" id="2.7.7.6"/>
    </reaction>
</comment>
<comment type="cofactor">
    <cofactor evidence="1">
        <name>Mg(2+)</name>
        <dbReference type="ChEBI" id="CHEBI:18420"/>
    </cofactor>
    <text evidence="1">Binds 1 Mg(2+) ion per subunit.</text>
</comment>
<comment type="cofactor">
    <cofactor evidence="1">
        <name>Zn(2+)</name>
        <dbReference type="ChEBI" id="CHEBI:29105"/>
    </cofactor>
    <text evidence="1">Binds 2 Zn(2+) ions per subunit.</text>
</comment>
<comment type="subunit">
    <text evidence="1">The RNAP catalytic core consists of 2 alpha, 1 beta, 1 beta' and 1 omega subunit. When a sigma factor is associated with the core the holoenzyme is formed, which can initiate transcription.</text>
</comment>
<comment type="similarity">
    <text evidence="1">Belongs to the RNA polymerase beta' chain family.</text>
</comment>
<protein>
    <recommendedName>
        <fullName evidence="1">DNA-directed RNA polymerase subunit beta'</fullName>
        <shortName evidence="1">RNAP subunit beta'</shortName>
        <ecNumber evidence="1">2.7.7.6</ecNumber>
    </recommendedName>
    <alternativeName>
        <fullName evidence="1">RNA polymerase subunit beta'</fullName>
    </alternativeName>
    <alternativeName>
        <fullName evidence="1">Transcriptase subunit beta'</fullName>
    </alternativeName>
</protein>
<keyword id="KW-0240">DNA-directed RNA polymerase</keyword>
<keyword id="KW-0460">Magnesium</keyword>
<keyword id="KW-0479">Metal-binding</keyword>
<keyword id="KW-0548">Nucleotidyltransferase</keyword>
<keyword id="KW-0804">Transcription</keyword>
<keyword id="KW-0808">Transferase</keyword>
<keyword id="KW-0862">Zinc</keyword>
<organism>
    <name type="scientific">Brucella melitensis biotype 1 (strain ATCC 23456 / CCUG 17765 / NCTC 10094 / 16M)</name>
    <dbReference type="NCBI Taxonomy" id="224914"/>
    <lineage>
        <taxon>Bacteria</taxon>
        <taxon>Pseudomonadati</taxon>
        <taxon>Pseudomonadota</taxon>
        <taxon>Alphaproteobacteria</taxon>
        <taxon>Hyphomicrobiales</taxon>
        <taxon>Brucellaceae</taxon>
        <taxon>Brucella/Ochrobactrum group</taxon>
        <taxon>Brucella</taxon>
    </lineage>
</organism>
<name>RPOC_BRUME</name>
<feature type="chain" id="PRO_0000067717" description="DNA-directed RNA polymerase subunit beta'">
    <location>
        <begin position="1"/>
        <end position="1400"/>
    </location>
</feature>
<feature type="binding site" evidence="1">
    <location>
        <position position="71"/>
    </location>
    <ligand>
        <name>Zn(2+)</name>
        <dbReference type="ChEBI" id="CHEBI:29105"/>
        <label>1</label>
    </ligand>
</feature>
<feature type="binding site" evidence="1">
    <location>
        <position position="73"/>
    </location>
    <ligand>
        <name>Zn(2+)</name>
        <dbReference type="ChEBI" id="CHEBI:29105"/>
        <label>1</label>
    </ligand>
</feature>
<feature type="binding site" evidence="1">
    <location>
        <position position="86"/>
    </location>
    <ligand>
        <name>Zn(2+)</name>
        <dbReference type="ChEBI" id="CHEBI:29105"/>
        <label>1</label>
    </ligand>
</feature>
<feature type="binding site" evidence="1">
    <location>
        <position position="89"/>
    </location>
    <ligand>
        <name>Zn(2+)</name>
        <dbReference type="ChEBI" id="CHEBI:29105"/>
        <label>1</label>
    </ligand>
</feature>
<feature type="binding site" evidence="1">
    <location>
        <position position="462"/>
    </location>
    <ligand>
        <name>Mg(2+)</name>
        <dbReference type="ChEBI" id="CHEBI:18420"/>
    </ligand>
</feature>
<feature type="binding site" evidence="1">
    <location>
        <position position="464"/>
    </location>
    <ligand>
        <name>Mg(2+)</name>
        <dbReference type="ChEBI" id="CHEBI:18420"/>
    </ligand>
</feature>
<feature type="binding site" evidence="1">
    <location>
        <position position="466"/>
    </location>
    <ligand>
        <name>Mg(2+)</name>
        <dbReference type="ChEBI" id="CHEBI:18420"/>
    </ligand>
</feature>
<feature type="binding site" evidence="1">
    <location>
        <position position="811"/>
    </location>
    <ligand>
        <name>Zn(2+)</name>
        <dbReference type="ChEBI" id="CHEBI:29105"/>
        <label>2</label>
    </ligand>
</feature>
<feature type="binding site" evidence="1">
    <location>
        <position position="885"/>
    </location>
    <ligand>
        <name>Zn(2+)</name>
        <dbReference type="ChEBI" id="CHEBI:29105"/>
        <label>2</label>
    </ligand>
</feature>
<feature type="binding site" evidence="1">
    <location>
        <position position="892"/>
    </location>
    <ligand>
        <name>Zn(2+)</name>
        <dbReference type="ChEBI" id="CHEBI:29105"/>
        <label>2</label>
    </ligand>
</feature>
<feature type="binding site" evidence="1">
    <location>
        <position position="895"/>
    </location>
    <ligand>
        <name>Zn(2+)</name>
        <dbReference type="ChEBI" id="CHEBI:29105"/>
        <label>2</label>
    </ligand>
</feature>
<reference key="1">
    <citation type="journal article" date="2002" name="Proc. Natl. Acad. Sci. U.S.A.">
        <title>The genome sequence of the facultative intracellular pathogen Brucella melitensis.</title>
        <authorList>
            <person name="DelVecchio V.G."/>
            <person name="Kapatral V."/>
            <person name="Redkar R.J."/>
            <person name="Patra G."/>
            <person name="Mujer C."/>
            <person name="Los T."/>
            <person name="Ivanova N."/>
            <person name="Anderson I."/>
            <person name="Bhattacharyya A."/>
            <person name="Lykidis A."/>
            <person name="Reznik G."/>
            <person name="Jablonski L."/>
            <person name="Larsen N."/>
            <person name="D'Souza M."/>
            <person name="Bernal A."/>
            <person name="Mazur M."/>
            <person name="Goltsman E."/>
            <person name="Selkov E."/>
            <person name="Elzer P.H."/>
            <person name="Hagius S."/>
            <person name="O'Callaghan D."/>
            <person name="Letesson J.-J."/>
            <person name="Haselkorn R."/>
            <person name="Kyrpides N.C."/>
            <person name="Overbeek R."/>
        </authorList>
    </citation>
    <scope>NUCLEOTIDE SEQUENCE [LARGE SCALE GENOMIC DNA]</scope>
    <source>
        <strain>ATCC 23456 / CCUG 17765 / NCTC 10094 / 16M</strain>
    </source>
</reference>
<sequence length="1400" mass="155586">MNQEVMNLFNPQAPAQTFDSIRISIASPEKILSWSYGEIKKPETINYRTFKPERDGLFCARIFGPIKDYECLCGKYKRMKYKGIICEKCGVEVTLSRVRRERMGHIELAAPVAHIWFLKSLPSRIGTLLDMTLKDIERVLYFENYIVTEPGLTSLKEHQLLSEEEYMIAVDEFGEDQFTALIGAEAIYELLASMELEKIAADLRVDLAETTSDLKQKKLMKRLKIVENFLESGNRPEWMIMKIVPVIPPDLRPLVPLDGGRFATSDLNDLYRRVINRNNRLKRLIELRAPGIIIRNEKRMLQEAVDALFDNGRRGRVITGANKRPLKSLSDMLKGKQGRFRQNLLGKRVDYSGRSVIVTGPELKLHQCGLPKKMALELFKPFIYARLDAKGYSSTVKQAKKLVEKERPEVWDILDEVIREHPVLLNRAPTLHRLGIQAFEPTLIEGKAIQLHPLVCTAFNADFDGDQMAVHVPLSLEAQLEARVLMMSTNNILHPANGAPIIVPSQDMVLGLYYLSIVAEKEPGEGMIFADMGELQHALENKVVTLHTKIKGRFKTVDAEGNPVSKIYDTTPGRMIMGELLPKNVNVPFDICNQEMTKKNISKMIDHVYRHCGQKETVIFCDRIMQLGFAHACRAGISFGKDDMVIPESKAKIVAETEALTTEYEQQYNDGLITQGEKYNKVVDAWGKATDKITEEMMARLKAVEFDPVTGRQKQMNSVYMMSHSGARGSVNQMRQLGGMRGLMAKPSGEIIETPIISNFKEGLTVNEYFNSTHGARKGLADTALKTANSGYLTRRLVDVAQDAIISEVDCGAEIGLTMQPIVDAGQIVASIGQRVLGRTALDPILHPVTGEVIVEAGRMVEEKDVEIIEKAGIQSIRIRSALTCETRNGVCAKCYGRDLARGTPVNQGEAVGVIAAQSIGEPGTQLTMRTFHLGGTAQVVDSSYLEASYEGTVKLRNRNVVRNSDGNLVVMGRNMAVLILDATGKERAVHRVTYGSRLFVDEGDTVKRGQRIAEWDPYTRPIMTEVEGYVEFEDLVDGLSVSETADESTGITKRVVIDWRSTPRGSDLKPAMVIKDKAGKILKLSKGGDARFLLSVESILSVEPGAHVKAGDVIARLPMESAKTKDITGGLPRVAELFEARRPKDHAIIAEIDGTVRFGRDYKNKRRIIIEPNDDTIEPVEYLIPKGKPFHLQDGDVIEKGEYILDGNPAPHDILAIKGVEALASYLVNEIQEVYRLQGVLINDKHIEVIVRQMLQKVEITESGDTGYIPGDHVDRIELEEINERLIEEGKKPGSGNPVLLGITKASLQTPSFISAASFQETTRVLTEAAVAGKMDTLQGLKENVIVGRLIPAGTGGMTNQIRRIATARDELIIDERRKTSGSAEANAMLVDMTNNAAE</sequence>
<dbReference type="EC" id="2.7.7.6" evidence="1"/>
<dbReference type="EMBL" id="AE008917">
    <property type="protein sequence ID" value="AAL51931.1"/>
    <property type="molecule type" value="Genomic_DNA"/>
</dbReference>
<dbReference type="PIR" id="AH3345">
    <property type="entry name" value="AH3345"/>
</dbReference>
<dbReference type="RefSeq" id="WP_004683930.1">
    <property type="nucleotide sequence ID" value="NZ_GG703780.1"/>
</dbReference>
<dbReference type="SMR" id="Q8YHP7"/>
<dbReference type="GeneID" id="29593559"/>
<dbReference type="KEGG" id="bme:BMEI0750"/>
<dbReference type="KEGG" id="bmel:DK63_672"/>
<dbReference type="PATRIC" id="fig|224914.52.peg.703"/>
<dbReference type="eggNOG" id="COG0086">
    <property type="taxonomic scope" value="Bacteria"/>
</dbReference>
<dbReference type="PhylomeDB" id="Q8YHP7"/>
<dbReference type="Proteomes" id="UP000000419">
    <property type="component" value="Chromosome I"/>
</dbReference>
<dbReference type="GO" id="GO:0000428">
    <property type="term" value="C:DNA-directed RNA polymerase complex"/>
    <property type="evidence" value="ECO:0007669"/>
    <property type="project" value="UniProtKB-KW"/>
</dbReference>
<dbReference type="GO" id="GO:0003677">
    <property type="term" value="F:DNA binding"/>
    <property type="evidence" value="ECO:0007669"/>
    <property type="project" value="UniProtKB-UniRule"/>
</dbReference>
<dbReference type="GO" id="GO:0003899">
    <property type="term" value="F:DNA-directed RNA polymerase activity"/>
    <property type="evidence" value="ECO:0007669"/>
    <property type="project" value="UniProtKB-UniRule"/>
</dbReference>
<dbReference type="GO" id="GO:0000287">
    <property type="term" value="F:magnesium ion binding"/>
    <property type="evidence" value="ECO:0007669"/>
    <property type="project" value="UniProtKB-UniRule"/>
</dbReference>
<dbReference type="GO" id="GO:0008270">
    <property type="term" value="F:zinc ion binding"/>
    <property type="evidence" value="ECO:0007669"/>
    <property type="project" value="UniProtKB-UniRule"/>
</dbReference>
<dbReference type="GO" id="GO:0006351">
    <property type="term" value="P:DNA-templated transcription"/>
    <property type="evidence" value="ECO:0007669"/>
    <property type="project" value="UniProtKB-UniRule"/>
</dbReference>
<dbReference type="CDD" id="cd02655">
    <property type="entry name" value="RNAP_beta'_C"/>
    <property type="match status" value="1"/>
</dbReference>
<dbReference type="CDD" id="cd01609">
    <property type="entry name" value="RNAP_beta'_N"/>
    <property type="match status" value="1"/>
</dbReference>
<dbReference type="FunFam" id="4.10.860.120:FF:000001">
    <property type="entry name" value="DNA-directed RNA polymerase subunit beta"/>
    <property type="match status" value="1"/>
</dbReference>
<dbReference type="Gene3D" id="1.10.132.30">
    <property type="match status" value="1"/>
</dbReference>
<dbReference type="Gene3D" id="1.10.150.390">
    <property type="match status" value="1"/>
</dbReference>
<dbReference type="Gene3D" id="1.10.1790.20">
    <property type="match status" value="1"/>
</dbReference>
<dbReference type="Gene3D" id="1.10.40.90">
    <property type="match status" value="1"/>
</dbReference>
<dbReference type="Gene3D" id="2.40.40.20">
    <property type="match status" value="1"/>
</dbReference>
<dbReference type="Gene3D" id="2.40.50.100">
    <property type="match status" value="3"/>
</dbReference>
<dbReference type="Gene3D" id="4.10.860.120">
    <property type="entry name" value="RNA polymerase II, clamp domain"/>
    <property type="match status" value="1"/>
</dbReference>
<dbReference type="Gene3D" id="1.10.274.100">
    <property type="entry name" value="RNA polymerase Rpb1, domain 3"/>
    <property type="match status" value="1"/>
</dbReference>
<dbReference type="HAMAP" id="MF_01322">
    <property type="entry name" value="RNApol_bact_RpoC"/>
    <property type="match status" value="1"/>
</dbReference>
<dbReference type="InterPro" id="IPR045867">
    <property type="entry name" value="DNA-dir_RpoC_beta_prime"/>
</dbReference>
<dbReference type="InterPro" id="IPR012754">
    <property type="entry name" value="DNA-dir_RpoC_beta_prime_bact"/>
</dbReference>
<dbReference type="InterPro" id="IPR000722">
    <property type="entry name" value="RNA_pol_asu"/>
</dbReference>
<dbReference type="InterPro" id="IPR006592">
    <property type="entry name" value="RNA_pol_N"/>
</dbReference>
<dbReference type="InterPro" id="IPR007080">
    <property type="entry name" value="RNA_pol_Rpb1_1"/>
</dbReference>
<dbReference type="InterPro" id="IPR007066">
    <property type="entry name" value="RNA_pol_Rpb1_3"/>
</dbReference>
<dbReference type="InterPro" id="IPR042102">
    <property type="entry name" value="RNA_pol_Rpb1_3_sf"/>
</dbReference>
<dbReference type="InterPro" id="IPR007083">
    <property type="entry name" value="RNA_pol_Rpb1_4"/>
</dbReference>
<dbReference type="InterPro" id="IPR007081">
    <property type="entry name" value="RNA_pol_Rpb1_5"/>
</dbReference>
<dbReference type="InterPro" id="IPR044893">
    <property type="entry name" value="RNA_pol_Rpb1_clamp_domain"/>
</dbReference>
<dbReference type="InterPro" id="IPR038120">
    <property type="entry name" value="Rpb1_funnel_sf"/>
</dbReference>
<dbReference type="NCBIfam" id="TIGR02386">
    <property type="entry name" value="rpoC_TIGR"/>
    <property type="match status" value="1"/>
</dbReference>
<dbReference type="PANTHER" id="PTHR19376">
    <property type="entry name" value="DNA-DIRECTED RNA POLYMERASE"/>
    <property type="match status" value="1"/>
</dbReference>
<dbReference type="PANTHER" id="PTHR19376:SF54">
    <property type="entry name" value="DNA-DIRECTED RNA POLYMERASE SUBUNIT BETA"/>
    <property type="match status" value="1"/>
</dbReference>
<dbReference type="Pfam" id="PF04997">
    <property type="entry name" value="RNA_pol_Rpb1_1"/>
    <property type="match status" value="1"/>
</dbReference>
<dbReference type="Pfam" id="PF00623">
    <property type="entry name" value="RNA_pol_Rpb1_2"/>
    <property type="match status" value="1"/>
</dbReference>
<dbReference type="Pfam" id="PF04983">
    <property type="entry name" value="RNA_pol_Rpb1_3"/>
    <property type="match status" value="1"/>
</dbReference>
<dbReference type="Pfam" id="PF05000">
    <property type="entry name" value="RNA_pol_Rpb1_4"/>
    <property type="match status" value="1"/>
</dbReference>
<dbReference type="Pfam" id="PF04998">
    <property type="entry name" value="RNA_pol_Rpb1_5"/>
    <property type="match status" value="1"/>
</dbReference>
<dbReference type="SMART" id="SM00663">
    <property type="entry name" value="RPOLA_N"/>
    <property type="match status" value="1"/>
</dbReference>
<dbReference type="SUPFAM" id="SSF64484">
    <property type="entry name" value="beta and beta-prime subunits of DNA dependent RNA-polymerase"/>
    <property type="match status" value="1"/>
</dbReference>
<evidence type="ECO:0000255" key="1">
    <source>
        <dbReference type="HAMAP-Rule" id="MF_01322"/>
    </source>
</evidence>
<gene>
    <name evidence="1" type="primary">rpoC</name>
    <name type="ordered locus">BMEI0750</name>
</gene>